<dbReference type="EMBL" id="AM236080">
    <property type="protein sequence ID" value="CAK07277.1"/>
    <property type="molecule type" value="Genomic_DNA"/>
</dbReference>
<dbReference type="RefSeq" id="WP_003558545.1">
    <property type="nucleotide sequence ID" value="NC_008380.1"/>
</dbReference>
<dbReference type="SMR" id="Q1MID3"/>
<dbReference type="EnsemblBacteria" id="CAK07277">
    <property type="protein sequence ID" value="CAK07277"/>
    <property type="gene ID" value="RL1782"/>
</dbReference>
<dbReference type="GeneID" id="84669495"/>
<dbReference type="KEGG" id="rle:RL1782"/>
<dbReference type="eggNOG" id="COG0255">
    <property type="taxonomic scope" value="Bacteria"/>
</dbReference>
<dbReference type="HOGENOM" id="CLU_158491_1_0_5"/>
<dbReference type="Proteomes" id="UP000006575">
    <property type="component" value="Chromosome"/>
</dbReference>
<dbReference type="GO" id="GO:0022625">
    <property type="term" value="C:cytosolic large ribosomal subunit"/>
    <property type="evidence" value="ECO:0007669"/>
    <property type="project" value="TreeGrafter"/>
</dbReference>
<dbReference type="GO" id="GO:0003735">
    <property type="term" value="F:structural constituent of ribosome"/>
    <property type="evidence" value="ECO:0007669"/>
    <property type="project" value="InterPro"/>
</dbReference>
<dbReference type="GO" id="GO:0006412">
    <property type="term" value="P:translation"/>
    <property type="evidence" value="ECO:0007669"/>
    <property type="project" value="UniProtKB-UniRule"/>
</dbReference>
<dbReference type="CDD" id="cd00427">
    <property type="entry name" value="Ribosomal_L29_HIP"/>
    <property type="match status" value="1"/>
</dbReference>
<dbReference type="FunFam" id="1.10.287.310:FF:000001">
    <property type="entry name" value="50S ribosomal protein L29"/>
    <property type="match status" value="1"/>
</dbReference>
<dbReference type="Gene3D" id="1.10.287.310">
    <property type="match status" value="1"/>
</dbReference>
<dbReference type="HAMAP" id="MF_00374">
    <property type="entry name" value="Ribosomal_uL29"/>
    <property type="match status" value="1"/>
</dbReference>
<dbReference type="InterPro" id="IPR050063">
    <property type="entry name" value="Ribosomal_protein_uL29"/>
</dbReference>
<dbReference type="InterPro" id="IPR001854">
    <property type="entry name" value="Ribosomal_uL29"/>
</dbReference>
<dbReference type="InterPro" id="IPR018254">
    <property type="entry name" value="Ribosomal_uL29_CS"/>
</dbReference>
<dbReference type="InterPro" id="IPR036049">
    <property type="entry name" value="Ribosomal_uL29_sf"/>
</dbReference>
<dbReference type="NCBIfam" id="TIGR00012">
    <property type="entry name" value="L29"/>
    <property type="match status" value="1"/>
</dbReference>
<dbReference type="PANTHER" id="PTHR10916">
    <property type="entry name" value="60S RIBOSOMAL PROTEIN L35/50S RIBOSOMAL PROTEIN L29"/>
    <property type="match status" value="1"/>
</dbReference>
<dbReference type="PANTHER" id="PTHR10916:SF0">
    <property type="entry name" value="LARGE RIBOSOMAL SUBUNIT PROTEIN UL29C"/>
    <property type="match status" value="1"/>
</dbReference>
<dbReference type="Pfam" id="PF00831">
    <property type="entry name" value="Ribosomal_L29"/>
    <property type="match status" value="1"/>
</dbReference>
<dbReference type="SUPFAM" id="SSF46561">
    <property type="entry name" value="Ribosomal protein L29 (L29p)"/>
    <property type="match status" value="1"/>
</dbReference>
<dbReference type="PROSITE" id="PS00579">
    <property type="entry name" value="RIBOSOMAL_L29"/>
    <property type="match status" value="1"/>
</dbReference>
<comment type="similarity">
    <text evidence="1">Belongs to the universal ribosomal protein uL29 family.</text>
</comment>
<name>RL29_RHIJ3</name>
<organism>
    <name type="scientific">Rhizobium johnstonii (strain DSM 114642 / LMG 32736 / 3841)</name>
    <name type="common">Rhizobium leguminosarum bv. viciae</name>
    <dbReference type="NCBI Taxonomy" id="216596"/>
    <lineage>
        <taxon>Bacteria</taxon>
        <taxon>Pseudomonadati</taxon>
        <taxon>Pseudomonadota</taxon>
        <taxon>Alphaproteobacteria</taxon>
        <taxon>Hyphomicrobiales</taxon>
        <taxon>Rhizobiaceae</taxon>
        <taxon>Rhizobium/Agrobacterium group</taxon>
        <taxon>Rhizobium</taxon>
        <taxon>Rhizobium johnstonii</taxon>
    </lineage>
</organism>
<sequence>MKASDVRAFTADQLKDELAKLKKEQFNLRFQKATGQLEKSSRINEVRKDIARVKTIARQKAAEVKA</sequence>
<feature type="chain" id="PRO_1000007578" description="Large ribosomal subunit protein uL29">
    <location>
        <begin position="1"/>
        <end position="66"/>
    </location>
</feature>
<gene>
    <name evidence="1" type="primary">rpmC</name>
    <name type="ordered locus">RL1782</name>
</gene>
<evidence type="ECO:0000255" key="1">
    <source>
        <dbReference type="HAMAP-Rule" id="MF_00374"/>
    </source>
</evidence>
<evidence type="ECO:0000305" key="2"/>
<proteinExistence type="inferred from homology"/>
<protein>
    <recommendedName>
        <fullName evidence="1">Large ribosomal subunit protein uL29</fullName>
    </recommendedName>
    <alternativeName>
        <fullName evidence="2">50S ribosomal protein L29</fullName>
    </alternativeName>
</protein>
<keyword id="KW-0687">Ribonucleoprotein</keyword>
<keyword id="KW-0689">Ribosomal protein</keyword>
<accession>Q1MID3</accession>
<reference key="1">
    <citation type="journal article" date="2006" name="Genome Biol.">
        <title>The genome of Rhizobium leguminosarum has recognizable core and accessory components.</title>
        <authorList>
            <person name="Young J.P.W."/>
            <person name="Crossman L.C."/>
            <person name="Johnston A.W.B."/>
            <person name="Thomson N.R."/>
            <person name="Ghazoui Z.F."/>
            <person name="Hull K.H."/>
            <person name="Wexler M."/>
            <person name="Curson A.R.J."/>
            <person name="Todd J.D."/>
            <person name="Poole P.S."/>
            <person name="Mauchline T.H."/>
            <person name="East A.K."/>
            <person name="Quail M.A."/>
            <person name="Churcher C."/>
            <person name="Arrowsmith C."/>
            <person name="Cherevach I."/>
            <person name="Chillingworth T."/>
            <person name="Clarke K."/>
            <person name="Cronin A."/>
            <person name="Davis P."/>
            <person name="Fraser A."/>
            <person name="Hance Z."/>
            <person name="Hauser H."/>
            <person name="Jagels K."/>
            <person name="Moule S."/>
            <person name="Mungall K."/>
            <person name="Norbertczak H."/>
            <person name="Rabbinowitsch E."/>
            <person name="Sanders M."/>
            <person name="Simmonds M."/>
            <person name="Whitehead S."/>
            <person name="Parkhill J."/>
        </authorList>
    </citation>
    <scope>NUCLEOTIDE SEQUENCE [LARGE SCALE GENOMIC DNA]</scope>
    <source>
        <strain>DSM 114642 / LMG 32736 / 3841</strain>
    </source>
</reference>